<comment type="function">
    <text evidence="1">May be involved in recombination.</text>
</comment>
<comment type="subcellular location">
    <subcellularLocation>
        <location evidence="1">Cytoplasm</location>
        <location evidence="1">Nucleoid</location>
    </subcellularLocation>
</comment>
<comment type="similarity">
    <text evidence="1">Belongs to the RdgC family.</text>
</comment>
<dbReference type="EMBL" id="CP000891">
    <property type="protein sequence ID" value="ABX48575.1"/>
    <property type="molecule type" value="Genomic_DNA"/>
</dbReference>
<dbReference type="RefSeq" id="WP_012196808.1">
    <property type="nucleotide sequence ID" value="NC_009997.1"/>
</dbReference>
<dbReference type="SMR" id="A9KTN4"/>
<dbReference type="GeneID" id="11771657"/>
<dbReference type="KEGG" id="sbn:Sbal195_1401"/>
<dbReference type="HOGENOM" id="CLU_052038_1_1_6"/>
<dbReference type="Proteomes" id="UP000000770">
    <property type="component" value="Chromosome"/>
</dbReference>
<dbReference type="GO" id="GO:0043590">
    <property type="term" value="C:bacterial nucleoid"/>
    <property type="evidence" value="ECO:0007669"/>
    <property type="project" value="TreeGrafter"/>
</dbReference>
<dbReference type="GO" id="GO:0005737">
    <property type="term" value="C:cytoplasm"/>
    <property type="evidence" value="ECO:0007669"/>
    <property type="project" value="UniProtKB-UniRule"/>
</dbReference>
<dbReference type="GO" id="GO:0003690">
    <property type="term" value="F:double-stranded DNA binding"/>
    <property type="evidence" value="ECO:0007669"/>
    <property type="project" value="TreeGrafter"/>
</dbReference>
<dbReference type="GO" id="GO:0006310">
    <property type="term" value="P:DNA recombination"/>
    <property type="evidence" value="ECO:0007669"/>
    <property type="project" value="UniProtKB-UniRule"/>
</dbReference>
<dbReference type="GO" id="GO:0000018">
    <property type="term" value="P:regulation of DNA recombination"/>
    <property type="evidence" value="ECO:0007669"/>
    <property type="project" value="TreeGrafter"/>
</dbReference>
<dbReference type="HAMAP" id="MF_00194">
    <property type="entry name" value="RdgC"/>
    <property type="match status" value="1"/>
</dbReference>
<dbReference type="InterPro" id="IPR007476">
    <property type="entry name" value="RdgC"/>
</dbReference>
<dbReference type="NCBIfam" id="NF001462">
    <property type="entry name" value="PRK00321.1-3"/>
    <property type="match status" value="1"/>
</dbReference>
<dbReference type="NCBIfam" id="NF001464">
    <property type="entry name" value="PRK00321.1-5"/>
    <property type="match status" value="1"/>
</dbReference>
<dbReference type="PANTHER" id="PTHR38103">
    <property type="entry name" value="RECOMBINATION-ASSOCIATED PROTEIN RDGC"/>
    <property type="match status" value="1"/>
</dbReference>
<dbReference type="PANTHER" id="PTHR38103:SF1">
    <property type="entry name" value="RECOMBINATION-ASSOCIATED PROTEIN RDGC"/>
    <property type="match status" value="1"/>
</dbReference>
<dbReference type="Pfam" id="PF04381">
    <property type="entry name" value="RdgC"/>
    <property type="match status" value="1"/>
</dbReference>
<proteinExistence type="inferred from homology"/>
<feature type="chain" id="PRO_1000077642" description="Recombination-associated protein RdgC">
    <location>
        <begin position="1"/>
        <end position="304"/>
    </location>
</feature>
<accession>A9KTN4</accession>
<keyword id="KW-0963">Cytoplasm</keyword>
<keyword id="KW-0233">DNA recombination</keyword>
<organism>
    <name type="scientific">Shewanella baltica (strain OS195)</name>
    <dbReference type="NCBI Taxonomy" id="399599"/>
    <lineage>
        <taxon>Bacteria</taxon>
        <taxon>Pseudomonadati</taxon>
        <taxon>Pseudomonadota</taxon>
        <taxon>Gammaproteobacteria</taxon>
        <taxon>Alteromonadales</taxon>
        <taxon>Shewanellaceae</taxon>
        <taxon>Shewanella</taxon>
    </lineage>
</organism>
<reference key="1">
    <citation type="submission" date="2007-11" db="EMBL/GenBank/DDBJ databases">
        <title>Complete sequence of chromosome of Shewanella baltica OS195.</title>
        <authorList>
            <consortium name="US DOE Joint Genome Institute"/>
            <person name="Copeland A."/>
            <person name="Lucas S."/>
            <person name="Lapidus A."/>
            <person name="Barry K."/>
            <person name="Glavina del Rio T."/>
            <person name="Dalin E."/>
            <person name="Tice H."/>
            <person name="Pitluck S."/>
            <person name="Chain P."/>
            <person name="Malfatti S."/>
            <person name="Shin M."/>
            <person name="Vergez L."/>
            <person name="Schmutz J."/>
            <person name="Larimer F."/>
            <person name="Land M."/>
            <person name="Hauser L."/>
            <person name="Kyrpides N."/>
            <person name="Kim E."/>
            <person name="Brettar I."/>
            <person name="Rodrigues J."/>
            <person name="Konstantinidis K."/>
            <person name="Klappenbach J."/>
            <person name="Hofle M."/>
            <person name="Tiedje J."/>
            <person name="Richardson P."/>
        </authorList>
    </citation>
    <scope>NUCLEOTIDE SEQUENCE [LARGE SCALE GENOMIC DNA]</scope>
    <source>
        <strain>OS195</strain>
    </source>
</reference>
<protein>
    <recommendedName>
        <fullName evidence="1">Recombination-associated protein RdgC</fullName>
    </recommendedName>
</protein>
<name>RDGC_SHEB9</name>
<gene>
    <name evidence="1" type="primary">rdgC</name>
    <name type="ordered locus">Sbal195_1401</name>
</gene>
<evidence type="ECO:0000255" key="1">
    <source>
        <dbReference type="HAMAP-Rule" id="MF_00194"/>
    </source>
</evidence>
<sequence>MWFKNLTLYRFNKPFAVETEALETALADFTFSPCSSQDVSKFGFSNALGKKGSSLVHSADNRHLICVTKEEKILPGQVIKEALEEKVALIEDEENRKMAKKEKDALKDEIITSLLPRAFSRRSQTHALILPELEMILVDSSSATKTEELLALLRKALGSLPVIPLSFKAPVESNLTEWLKLGSAPLPFEMQDEAELKSEADEGGIVRFKQQDLKEDEVLAHLATGKQVHKLALHFGQSIALLLQSDASVKRLKFSEEFRAGNDEVGTDDPMARLDADFALMGSELVALMHALVAALGGLEEAQV</sequence>